<keyword id="KW-0131">Cell cycle</keyword>
<keyword id="KW-0132">Cell division</keyword>
<keyword id="KW-0574">Periplasm</keyword>
<keyword id="KW-1185">Reference proteome</keyword>
<keyword id="KW-0732">Signal</keyword>
<proteinExistence type="inferred from homology"/>
<reference key="1">
    <citation type="journal article" date="2003" name="J. Bacteriol.">
        <title>Complete genome sequence of the ammonia-oxidizing bacterium and obligate chemolithoautotroph Nitrosomonas europaea.</title>
        <authorList>
            <person name="Chain P."/>
            <person name="Lamerdin J.E."/>
            <person name="Larimer F.W."/>
            <person name="Regala W."/>
            <person name="Lao V."/>
            <person name="Land M.L."/>
            <person name="Hauser L."/>
            <person name="Hooper A.B."/>
            <person name="Klotz M.G."/>
            <person name="Norton J."/>
            <person name="Sayavedra-Soto L.A."/>
            <person name="Arciero D.M."/>
            <person name="Hommes N.G."/>
            <person name="Whittaker M.M."/>
            <person name="Arp D.J."/>
        </authorList>
    </citation>
    <scope>NUCLEOTIDE SEQUENCE [LARGE SCALE GENOMIC DNA]</scope>
    <source>
        <strain>ATCC 19718 / CIP 103999 / KCTC 2705 / NBRC 14298</strain>
    </source>
</reference>
<accession>Q82XN9</accession>
<comment type="function">
    <text evidence="1">Part of the Tol-Pal system, which plays a role in outer membrane invagination during cell division and is important for maintaining outer membrane integrity.</text>
</comment>
<comment type="subunit">
    <text evidence="1">The Tol-Pal system is composed of five core proteins: the inner membrane proteins TolA, TolQ and TolR, the periplasmic protein TolB and the outer membrane protein Pal. They form a network linking the inner and outer membranes and the peptidoglycan layer.</text>
</comment>
<comment type="subcellular location">
    <subcellularLocation>
        <location evidence="1">Periplasm</location>
    </subcellularLocation>
</comment>
<comment type="similarity">
    <text evidence="1">Belongs to the TolB family.</text>
</comment>
<dbReference type="EMBL" id="AL954747">
    <property type="protein sequence ID" value="CAD84129.1"/>
    <property type="molecule type" value="Genomic_DNA"/>
</dbReference>
<dbReference type="RefSeq" id="WP_011110863.1">
    <property type="nucleotide sequence ID" value="NC_004757.1"/>
</dbReference>
<dbReference type="SMR" id="Q82XN9"/>
<dbReference type="STRING" id="228410.NE0218"/>
<dbReference type="GeneID" id="87103425"/>
<dbReference type="KEGG" id="neu:NE0218"/>
<dbReference type="eggNOG" id="COG0823">
    <property type="taxonomic scope" value="Bacteria"/>
</dbReference>
<dbReference type="HOGENOM" id="CLU_047123_0_0_4"/>
<dbReference type="OrthoDB" id="9802240at2"/>
<dbReference type="PhylomeDB" id="Q82XN9"/>
<dbReference type="Proteomes" id="UP000001416">
    <property type="component" value="Chromosome"/>
</dbReference>
<dbReference type="GO" id="GO:0042597">
    <property type="term" value="C:periplasmic space"/>
    <property type="evidence" value="ECO:0007669"/>
    <property type="project" value="UniProtKB-SubCell"/>
</dbReference>
<dbReference type="GO" id="GO:0051301">
    <property type="term" value="P:cell division"/>
    <property type="evidence" value="ECO:0007669"/>
    <property type="project" value="UniProtKB-UniRule"/>
</dbReference>
<dbReference type="GO" id="GO:0017038">
    <property type="term" value="P:protein import"/>
    <property type="evidence" value="ECO:0007669"/>
    <property type="project" value="InterPro"/>
</dbReference>
<dbReference type="Gene3D" id="2.120.10.30">
    <property type="entry name" value="TolB, C-terminal domain"/>
    <property type="match status" value="1"/>
</dbReference>
<dbReference type="Gene3D" id="3.40.50.10070">
    <property type="entry name" value="TolB, N-terminal domain"/>
    <property type="match status" value="1"/>
</dbReference>
<dbReference type="HAMAP" id="MF_00671">
    <property type="entry name" value="TolB"/>
    <property type="match status" value="1"/>
</dbReference>
<dbReference type="InterPro" id="IPR011042">
    <property type="entry name" value="6-blade_b-propeller_TolB-like"/>
</dbReference>
<dbReference type="InterPro" id="IPR011659">
    <property type="entry name" value="PD40"/>
</dbReference>
<dbReference type="InterPro" id="IPR014167">
    <property type="entry name" value="Tol-Pal_TolB"/>
</dbReference>
<dbReference type="InterPro" id="IPR007195">
    <property type="entry name" value="TolB_N"/>
</dbReference>
<dbReference type="NCBIfam" id="TIGR02800">
    <property type="entry name" value="propeller_TolB"/>
    <property type="match status" value="1"/>
</dbReference>
<dbReference type="PANTHER" id="PTHR36842:SF1">
    <property type="entry name" value="PROTEIN TOLB"/>
    <property type="match status" value="1"/>
</dbReference>
<dbReference type="PANTHER" id="PTHR36842">
    <property type="entry name" value="PROTEIN TOLB HOMOLOG"/>
    <property type="match status" value="1"/>
</dbReference>
<dbReference type="Pfam" id="PF07676">
    <property type="entry name" value="PD40"/>
    <property type="match status" value="5"/>
</dbReference>
<dbReference type="Pfam" id="PF04052">
    <property type="entry name" value="TolB_N"/>
    <property type="match status" value="1"/>
</dbReference>
<dbReference type="SUPFAM" id="SSF52964">
    <property type="entry name" value="TolB, N-terminal domain"/>
    <property type="match status" value="1"/>
</dbReference>
<dbReference type="SUPFAM" id="SSF69304">
    <property type="entry name" value="Tricorn protease N-terminal domain"/>
    <property type="match status" value="1"/>
</dbReference>
<protein>
    <recommendedName>
        <fullName evidence="1">Tol-Pal system protein TolB</fullName>
    </recommendedName>
</protein>
<organism>
    <name type="scientific">Nitrosomonas europaea (strain ATCC 19718 / CIP 103999 / KCTC 2705 / NBRC 14298)</name>
    <dbReference type="NCBI Taxonomy" id="228410"/>
    <lineage>
        <taxon>Bacteria</taxon>
        <taxon>Pseudomonadati</taxon>
        <taxon>Pseudomonadota</taxon>
        <taxon>Betaproteobacteria</taxon>
        <taxon>Nitrosomonadales</taxon>
        <taxon>Nitrosomonadaceae</taxon>
        <taxon>Nitrosomonas</taxon>
    </lineage>
</organism>
<gene>
    <name evidence="1" type="primary">tolB</name>
    <name type="ordered locus">NE0218</name>
</gene>
<name>TOLB_NITEU</name>
<sequence>MRNFLYCTGVLLLLWMSTSSQAALNIEIFGGGTNKIPIAIAPFNGERGLPQSISAIVSADLERTGLFKLVDTLGLTSQEPEQIRYIDWQGRGASALVVGSISPLPDGRIDVRFRLLDVVKQTQLTGFSGAVTTEQLRAFAHRIADIVYETLTGEPGAFSTRIAFVRKQGSQYALQVSDYDGFNARSLIEYTEPIISPAWSPDGSRIAYTSFEKKKPVVYVQTLATRERKAVANFKGSNSAPAWSPDGSKLAVVLTLHGGSQIYLINADGSGLQRISQSPGIDTEPSFSPDGRWLMFTSDRGGSPQIYRMPVSGGVAERMTFEGDYNVSPHYSPDGKRFVYIHRNAGRFNVAIQDLSTRQMQLLTDSNFDESPSFSPNNRMILYTTEIGGRGILSTVSSDGQAKSRLSQEAGNIREAVWGPLLKQR</sequence>
<feature type="signal peptide" evidence="1">
    <location>
        <begin position="1"/>
        <end position="22"/>
    </location>
</feature>
<feature type="chain" id="PRO_0000034667" description="Tol-Pal system protein TolB" evidence="1">
    <location>
        <begin position="23"/>
        <end position="425"/>
    </location>
</feature>
<evidence type="ECO:0000255" key="1">
    <source>
        <dbReference type="HAMAP-Rule" id="MF_00671"/>
    </source>
</evidence>